<keyword id="KW-0963">Cytoplasm</keyword>
<keyword id="KW-0489">Methyltransferase</keyword>
<keyword id="KW-1185">Reference proteome</keyword>
<keyword id="KW-0949">S-adenosyl-L-methionine</keyword>
<keyword id="KW-0808">Transferase</keyword>
<proteinExistence type="inferred from homology"/>
<evidence type="ECO:0000255" key="1">
    <source>
        <dbReference type="HAMAP-Rule" id="MF_00090"/>
    </source>
</evidence>
<reference key="1">
    <citation type="journal article" date="2003" name="Nat. Biotechnol.">
        <title>The genome sequence of the entomopathogenic bacterium Photorhabdus luminescens.</title>
        <authorList>
            <person name="Duchaud E."/>
            <person name="Rusniok C."/>
            <person name="Frangeul L."/>
            <person name="Buchrieser C."/>
            <person name="Givaudan A."/>
            <person name="Taourit S."/>
            <person name="Bocs S."/>
            <person name="Boursaux-Eude C."/>
            <person name="Chandler M."/>
            <person name="Charles J.-F."/>
            <person name="Dassa E."/>
            <person name="Derose R."/>
            <person name="Derzelle S."/>
            <person name="Freyssinet G."/>
            <person name="Gaudriault S."/>
            <person name="Medigue C."/>
            <person name="Lanois A."/>
            <person name="Powell K."/>
            <person name="Siguier P."/>
            <person name="Vincent R."/>
            <person name="Wingate V."/>
            <person name="Zouine M."/>
            <person name="Glaser P."/>
            <person name="Boemare N."/>
            <person name="Danchin A."/>
            <person name="Kunst F."/>
        </authorList>
    </citation>
    <scope>NUCLEOTIDE SEQUENCE [LARGE SCALE GENOMIC DNA]</scope>
    <source>
        <strain>DSM 15139 / CIP 105565 / TT01</strain>
    </source>
</reference>
<dbReference type="EC" id="2.1.1.77" evidence="1"/>
<dbReference type="EMBL" id="BX571861">
    <property type="protein sequence ID" value="CAE13012.1"/>
    <property type="molecule type" value="Genomic_DNA"/>
</dbReference>
<dbReference type="RefSeq" id="WP_011145093.1">
    <property type="nucleotide sequence ID" value="NC_005126.1"/>
</dbReference>
<dbReference type="SMR" id="Q7N8K3"/>
<dbReference type="STRING" id="243265.plu0717"/>
<dbReference type="GeneID" id="48847012"/>
<dbReference type="KEGG" id="plu:plu0717"/>
<dbReference type="eggNOG" id="COG2518">
    <property type="taxonomic scope" value="Bacteria"/>
</dbReference>
<dbReference type="HOGENOM" id="CLU_055432_2_0_6"/>
<dbReference type="OrthoDB" id="9810066at2"/>
<dbReference type="Proteomes" id="UP000002514">
    <property type="component" value="Chromosome"/>
</dbReference>
<dbReference type="GO" id="GO:0005737">
    <property type="term" value="C:cytoplasm"/>
    <property type="evidence" value="ECO:0007669"/>
    <property type="project" value="UniProtKB-SubCell"/>
</dbReference>
<dbReference type="GO" id="GO:0004719">
    <property type="term" value="F:protein-L-isoaspartate (D-aspartate) O-methyltransferase activity"/>
    <property type="evidence" value="ECO:0007669"/>
    <property type="project" value="UniProtKB-UniRule"/>
</dbReference>
<dbReference type="GO" id="GO:0032259">
    <property type="term" value="P:methylation"/>
    <property type="evidence" value="ECO:0007669"/>
    <property type="project" value="UniProtKB-KW"/>
</dbReference>
<dbReference type="GO" id="GO:0036211">
    <property type="term" value="P:protein modification process"/>
    <property type="evidence" value="ECO:0007669"/>
    <property type="project" value="UniProtKB-UniRule"/>
</dbReference>
<dbReference type="GO" id="GO:0030091">
    <property type="term" value="P:protein repair"/>
    <property type="evidence" value="ECO:0007669"/>
    <property type="project" value="UniProtKB-UniRule"/>
</dbReference>
<dbReference type="CDD" id="cd02440">
    <property type="entry name" value="AdoMet_MTases"/>
    <property type="match status" value="1"/>
</dbReference>
<dbReference type="FunFam" id="3.40.50.150:FF:000010">
    <property type="entry name" value="Protein-L-isoaspartate O-methyltransferase"/>
    <property type="match status" value="1"/>
</dbReference>
<dbReference type="Gene3D" id="3.40.50.150">
    <property type="entry name" value="Vaccinia Virus protein VP39"/>
    <property type="match status" value="1"/>
</dbReference>
<dbReference type="HAMAP" id="MF_00090">
    <property type="entry name" value="PIMT"/>
    <property type="match status" value="1"/>
</dbReference>
<dbReference type="InterPro" id="IPR000682">
    <property type="entry name" value="PCMT"/>
</dbReference>
<dbReference type="InterPro" id="IPR029063">
    <property type="entry name" value="SAM-dependent_MTases_sf"/>
</dbReference>
<dbReference type="NCBIfam" id="TIGR00080">
    <property type="entry name" value="pimt"/>
    <property type="match status" value="1"/>
</dbReference>
<dbReference type="NCBIfam" id="NF001453">
    <property type="entry name" value="PRK00312.1"/>
    <property type="match status" value="1"/>
</dbReference>
<dbReference type="PANTHER" id="PTHR11579">
    <property type="entry name" value="PROTEIN-L-ISOASPARTATE O-METHYLTRANSFERASE"/>
    <property type="match status" value="1"/>
</dbReference>
<dbReference type="PANTHER" id="PTHR11579:SF0">
    <property type="entry name" value="PROTEIN-L-ISOASPARTATE(D-ASPARTATE) O-METHYLTRANSFERASE"/>
    <property type="match status" value="1"/>
</dbReference>
<dbReference type="Pfam" id="PF01135">
    <property type="entry name" value="PCMT"/>
    <property type="match status" value="1"/>
</dbReference>
<dbReference type="SUPFAM" id="SSF53335">
    <property type="entry name" value="S-adenosyl-L-methionine-dependent methyltransferases"/>
    <property type="match status" value="1"/>
</dbReference>
<dbReference type="PROSITE" id="PS01279">
    <property type="entry name" value="PCMT"/>
    <property type="match status" value="1"/>
</dbReference>
<comment type="function">
    <text evidence="1">Catalyzes the methyl esterification of L-isoaspartyl residues in peptides and proteins that result from spontaneous decomposition of normal L-aspartyl and L-asparaginyl residues. It plays a role in the repair and/or degradation of damaged proteins.</text>
</comment>
<comment type="catalytic activity">
    <reaction evidence="1">
        <text>[protein]-L-isoaspartate + S-adenosyl-L-methionine = [protein]-L-isoaspartate alpha-methyl ester + S-adenosyl-L-homocysteine</text>
        <dbReference type="Rhea" id="RHEA:12705"/>
        <dbReference type="Rhea" id="RHEA-COMP:12143"/>
        <dbReference type="Rhea" id="RHEA-COMP:12144"/>
        <dbReference type="ChEBI" id="CHEBI:57856"/>
        <dbReference type="ChEBI" id="CHEBI:59789"/>
        <dbReference type="ChEBI" id="CHEBI:90596"/>
        <dbReference type="ChEBI" id="CHEBI:90598"/>
        <dbReference type="EC" id="2.1.1.77"/>
    </reaction>
</comment>
<comment type="subcellular location">
    <subcellularLocation>
        <location evidence="1">Cytoplasm</location>
    </subcellularLocation>
</comment>
<comment type="similarity">
    <text evidence="1">Belongs to the methyltransferase superfamily. L-isoaspartyl/D-aspartyl protein methyltransferase family.</text>
</comment>
<protein>
    <recommendedName>
        <fullName evidence="1">Protein-L-isoaspartate O-methyltransferase</fullName>
        <ecNumber evidence="1">2.1.1.77</ecNumber>
    </recommendedName>
    <alternativeName>
        <fullName evidence="1">L-isoaspartyl protein carboxyl methyltransferase</fullName>
    </alternativeName>
    <alternativeName>
        <fullName evidence="1">Protein L-isoaspartyl methyltransferase</fullName>
    </alternativeName>
    <alternativeName>
        <fullName evidence="1">Protein-beta-aspartate methyltransferase</fullName>
        <shortName evidence="1">PIMT</shortName>
    </alternativeName>
</protein>
<sequence>MLSRAMKNLLTQLRQQGIEDERLLAAISAVPRERFVDEALAHKAYENTALPIGYGQTISQPYIVARMTELLQLTPDAKILEIGTGSGYQTAILAHLVKHVFSVERIKGLQWQAKRRLKQLDLHNVSTRHGDGWQGWPSRGLFDAIIVTAAPPYIPQELMLQLTDGGVMVLPVGEHTQILKSVKRHGNGFHSEVIEAVRFVPLVQGELA</sequence>
<name>PIMT_PHOLL</name>
<feature type="chain" id="PRO_0000111895" description="Protein-L-isoaspartate O-methyltransferase">
    <location>
        <begin position="1"/>
        <end position="208"/>
    </location>
</feature>
<feature type="active site" evidence="1">
    <location>
        <position position="59"/>
    </location>
</feature>
<gene>
    <name evidence="1" type="primary">pcm</name>
    <name type="ordered locus">plu0717</name>
</gene>
<organism>
    <name type="scientific">Photorhabdus laumondii subsp. laumondii (strain DSM 15139 / CIP 105565 / TT01)</name>
    <name type="common">Photorhabdus luminescens subsp. laumondii</name>
    <dbReference type="NCBI Taxonomy" id="243265"/>
    <lineage>
        <taxon>Bacteria</taxon>
        <taxon>Pseudomonadati</taxon>
        <taxon>Pseudomonadota</taxon>
        <taxon>Gammaproteobacteria</taxon>
        <taxon>Enterobacterales</taxon>
        <taxon>Morganellaceae</taxon>
        <taxon>Photorhabdus</taxon>
    </lineage>
</organism>
<accession>Q7N8K3</accession>